<accession>A8EZG1</accession>
<name>MUTS_RICCK</name>
<feature type="chain" id="PRO_1000008087" description="DNA mismatch repair protein MutS">
    <location>
        <begin position="1"/>
        <end position="891"/>
    </location>
</feature>
<feature type="binding site" evidence="1">
    <location>
        <begin position="646"/>
        <end position="653"/>
    </location>
    <ligand>
        <name>ATP</name>
        <dbReference type="ChEBI" id="CHEBI:30616"/>
    </ligand>
</feature>
<keyword id="KW-0067">ATP-binding</keyword>
<keyword id="KW-0227">DNA damage</keyword>
<keyword id="KW-0234">DNA repair</keyword>
<keyword id="KW-0238">DNA-binding</keyword>
<keyword id="KW-0547">Nucleotide-binding</keyword>
<evidence type="ECO:0000255" key="1">
    <source>
        <dbReference type="HAMAP-Rule" id="MF_00096"/>
    </source>
</evidence>
<comment type="function">
    <text evidence="1">This protein is involved in the repair of mismatches in DNA. It is possible that it carries out the mismatch recognition step. This protein has a weak ATPase activity.</text>
</comment>
<comment type="similarity">
    <text evidence="1">Belongs to the DNA mismatch repair MutS family.</text>
</comment>
<proteinExistence type="inferred from homology"/>
<protein>
    <recommendedName>
        <fullName evidence="1">DNA mismatch repair protein MutS</fullName>
    </recommendedName>
</protein>
<sequence>MILLNMNLQEFKQKYNYDVATKMMQQYLDIKFAHLDCLLLFRMGDFYEMFYEDATIASKVLGIALTKRGKNGEEEIPMCGIPYHALENYLTKLIKENHKIAICDQLETPEEAKNKGGYKAVVSRDVTRIITPGTIIEENFIASDEPNYLASLVIPQNKETASLCYVDLSTSEIFVVNVPEAEILNELARLKPREILLSENLRSSNLADNIFKQLNFRITYQVDSFFAVNKCEKIILDFYKMKDIKGIGEISSGQICTIGSILEYLSLTQKQNIPHLPIPRIINFHSYMAIDVATRRNLEIVTNSQGGSKGSVLSTINHTVTKQGGRLLYNFLSSPLTDITKINQRLNITDFFYSNPAIVSKIREYLKRISDIERCLTRITMNRSSGHDLLSIKYTLETATIIKGVFFDVYGVNLPDFIEKIIKPLTGNEELYNLIEATIREDAPHNLNEGGIIKHEYHPKVAQLHDLINNGKLHIEKLRDQYRKETGIDSLKICHNNVIGLFIDITAKNANKITDPKFIHRQTTVNSVRYTTNELQKLESNLVNAKTLVISLEKALYADICRQVIVKSSYLRMLAISLSRLDVFCNFAYVADEYDYVKPEFTNDLSFNIVKGRHPVVEKALQRESKSFVYNDCRLSEFERIWLITGPNMAGKSTFLRQNAIIAIMAQIGSFVPAKSAKIGVVDKIFSRIGAADDLIKGQSTFMAEMLETSAILAQSTKNSLIILDEVGRGTSTYDGVSIAWSVLEYIHDKLKCRCLFATHYHELTFMSNFLPALQNYTIAIEELGKDILFLHNIISGAADRSYGIHVAALAGLPASVINRAEQILLKFEKTSTIKGKNILSTESNNFSLFNLKPNKTTISNKLYAKFRTIDPDKLSPKEALELIYELKKMV</sequence>
<dbReference type="EMBL" id="CP000409">
    <property type="protein sequence ID" value="ABV73744.1"/>
    <property type="molecule type" value="Genomic_DNA"/>
</dbReference>
<dbReference type="SMR" id="A8EZG1"/>
<dbReference type="STRING" id="293613.A1E_04085"/>
<dbReference type="KEGG" id="rcm:A1E_04085"/>
<dbReference type="eggNOG" id="COG0249">
    <property type="taxonomic scope" value="Bacteria"/>
</dbReference>
<dbReference type="HOGENOM" id="CLU_002472_3_1_5"/>
<dbReference type="Proteomes" id="UP000007056">
    <property type="component" value="Chromosome"/>
</dbReference>
<dbReference type="GO" id="GO:0005524">
    <property type="term" value="F:ATP binding"/>
    <property type="evidence" value="ECO:0007669"/>
    <property type="project" value="UniProtKB-UniRule"/>
</dbReference>
<dbReference type="GO" id="GO:0140664">
    <property type="term" value="F:ATP-dependent DNA damage sensor activity"/>
    <property type="evidence" value="ECO:0007669"/>
    <property type="project" value="InterPro"/>
</dbReference>
<dbReference type="GO" id="GO:0003684">
    <property type="term" value="F:damaged DNA binding"/>
    <property type="evidence" value="ECO:0007669"/>
    <property type="project" value="UniProtKB-UniRule"/>
</dbReference>
<dbReference type="GO" id="GO:0030983">
    <property type="term" value="F:mismatched DNA binding"/>
    <property type="evidence" value="ECO:0007669"/>
    <property type="project" value="InterPro"/>
</dbReference>
<dbReference type="GO" id="GO:0006298">
    <property type="term" value="P:mismatch repair"/>
    <property type="evidence" value="ECO:0007669"/>
    <property type="project" value="UniProtKB-UniRule"/>
</dbReference>
<dbReference type="CDD" id="cd03284">
    <property type="entry name" value="ABC_MutS1"/>
    <property type="match status" value="1"/>
</dbReference>
<dbReference type="FunFam" id="3.40.1170.10:FF:000001">
    <property type="entry name" value="DNA mismatch repair protein MutS"/>
    <property type="match status" value="1"/>
</dbReference>
<dbReference type="FunFam" id="3.40.50.300:FF:000870">
    <property type="entry name" value="MutS protein homolog 4"/>
    <property type="match status" value="1"/>
</dbReference>
<dbReference type="Gene3D" id="1.10.1420.10">
    <property type="match status" value="2"/>
</dbReference>
<dbReference type="Gene3D" id="6.10.140.430">
    <property type="match status" value="1"/>
</dbReference>
<dbReference type="Gene3D" id="3.40.1170.10">
    <property type="entry name" value="DNA repair protein MutS, domain I"/>
    <property type="match status" value="1"/>
</dbReference>
<dbReference type="Gene3D" id="3.30.420.110">
    <property type="entry name" value="MutS, connector domain"/>
    <property type="match status" value="1"/>
</dbReference>
<dbReference type="Gene3D" id="3.40.50.300">
    <property type="entry name" value="P-loop containing nucleotide triphosphate hydrolases"/>
    <property type="match status" value="1"/>
</dbReference>
<dbReference type="HAMAP" id="MF_00096">
    <property type="entry name" value="MutS"/>
    <property type="match status" value="1"/>
</dbReference>
<dbReference type="InterPro" id="IPR005748">
    <property type="entry name" value="DNA_mismatch_repair_MutS"/>
</dbReference>
<dbReference type="InterPro" id="IPR007695">
    <property type="entry name" value="DNA_mismatch_repair_MutS-lik_N"/>
</dbReference>
<dbReference type="InterPro" id="IPR017261">
    <property type="entry name" value="DNA_mismatch_repair_MutS/MSH"/>
</dbReference>
<dbReference type="InterPro" id="IPR000432">
    <property type="entry name" value="DNA_mismatch_repair_MutS_C"/>
</dbReference>
<dbReference type="InterPro" id="IPR007861">
    <property type="entry name" value="DNA_mismatch_repair_MutS_clamp"/>
</dbReference>
<dbReference type="InterPro" id="IPR007696">
    <property type="entry name" value="DNA_mismatch_repair_MutS_core"/>
</dbReference>
<dbReference type="InterPro" id="IPR016151">
    <property type="entry name" value="DNA_mismatch_repair_MutS_N"/>
</dbReference>
<dbReference type="InterPro" id="IPR036187">
    <property type="entry name" value="DNA_mismatch_repair_MutS_sf"/>
</dbReference>
<dbReference type="InterPro" id="IPR007860">
    <property type="entry name" value="DNA_mmatch_repair_MutS_con_dom"/>
</dbReference>
<dbReference type="InterPro" id="IPR045076">
    <property type="entry name" value="MutS"/>
</dbReference>
<dbReference type="InterPro" id="IPR036678">
    <property type="entry name" value="MutS_con_dom_sf"/>
</dbReference>
<dbReference type="InterPro" id="IPR027417">
    <property type="entry name" value="P-loop_NTPase"/>
</dbReference>
<dbReference type="NCBIfam" id="TIGR01070">
    <property type="entry name" value="mutS1"/>
    <property type="match status" value="1"/>
</dbReference>
<dbReference type="NCBIfam" id="NF003810">
    <property type="entry name" value="PRK05399.1"/>
    <property type="match status" value="1"/>
</dbReference>
<dbReference type="PANTHER" id="PTHR11361:SF34">
    <property type="entry name" value="DNA MISMATCH REPAIR PROTEIN MSH1, MITOCHONDRIAL"/>
    <property type="match status" value="1"/>
</dbReference>
<dbReference type="PANTHER" id="PTHR11361">
    <property type="entry name" value="DNA MISMATCH REPAIR PROTEIN MUTS FAMILY MEMBER"/>
    <property type="match status" value="1"/>
</dbReference>
<dbReference type="Pfam" id="PF01624">
    <property type="entry name" value="MutS_I"/>
    <property type="match status" value="1"/>
</dbReference>
<dbReference type="Pfam" id="PF05188">
    <property type="entry name" value="MutS_II"/>
    <property type="match status" value="1"/>
</dbReference>
<dbReference type="Pfam" id="PF05192">
    <property type="entry name" value="MutS_III"/>
    <property type="match status" value="1"/>
</dbReference>
<dbReference type="Pfam" id="PF05190">
    <property type="entry name" value="MutS_IV"/>
    <property type="match status" value="1"/>
</dbReference>
<dbReference type="Pfam" id="PF00488">
    <property type="entry name" value="MutS_V"/>
    <property type="match status" value="1"/>
</dbReference>
<dbReference type="PIRSF" id="PIRSF037677">
    <property type="entry name" value="DNA_mis_repair_Msh6"/>
    <property type="match status" value="1"/>
</dbReference>
<dbReference type="SMART" id="SM00534">
    <property type="entry name" value="MUTSac"/>
    <property type="match status" value="1"/>
</dbReference>
<dbReference type="SMART" id="SM00533">
    <property type="entry name" value="MUTSd"/>
    <property type="match status" value="1"/>
</dbReference>
<dbReference type="SUPFAM" id="SSF55271">
    <property type="entry name" value="DNA repair protein MutS, domain I"/>
    <property type="match status" value="1"/>
</dbReference>
<dbReference type="SUPFAM" id="SSF53150">
    <property type="entry name" value="DNA repair protein MutS, domain II"/>
    <property type="match status" value="1"/>
</dbReference>
<dbReference type="SUPFAM" id="SSF48334">
    <property type="entry name" value="DNA repair protein MutS, domain III"/>
    <property type="match status" value="1"/>
</dbReference>
<dbReference type="SUPFAM" id="SSF52540">
    <property type="entry name" value="P-loop containing nucleoside triphosphate hydrolases"/>
    <property type="match status" value="1"/>
</dbReference>
<dbReference type="PROSITE" id="PS00486">
    <property type="entry name" value="DNA_MISMATCH_REPAIR_2"/>
    <property type="match status" value="1"/>
</dbReference>
<reference key="1">
    <citation type="submission" date="2007-09" db="EMBL/GenBank/DDBJ databases">
        <title>Complete genome sequence of Rickettsia canadensis.</title>
        <authorList>
            <person name="Madan A."/>
            <person name="Fahey J."/>
            <person name="Helton E."/>
            <person name="Ketteman M."/>
            <person name="Madan A."/>
            <person name="Rodrigues S."/>
            <person name="Sanchez A."/>
            <person name="Whiting M."/>
            <person name="Dasch G."/>
            <person name="Eremeeva M."/>
        </authorList>
    </citation>
    <scope>NUCLEOTIDE SEQUENCE [LARGE SCALE GENOMIC DNA]</scope>
    <source>
        <strain>McKiel</strain>
    </source>
</reference>
<gene>
    <name evidence="1" type="primary">mutS</name>
    <name type="ordered locus">A1E_04085</name>
</gene>
<organism>
    <name type="scientific">Rickettsia canadensis (strain McKiel)</name>
    <dbReference type="NCBI Taxonomy" id="293613"/>
    <lineage>
        <taxon>Bacteria</taxon>
        <taxon>Pseudomonadati</taxon>
        <taxon>Pseudomonadota</taxon>
        <taxon>Alphaproteobacteria</taxon>
        <taxon>Rickettsiales</taxon>
        <taxon>Rickettsiaceae</taxon>
        <taxon>Rickettsieae</taxon>
        <taxon>Rickettsia</taxon>
        <taxon>belli group</taxon>
    </lineage>
</organism>